<gene>
    <name evidence="1" type="primary">yccT</name>
    <name type="ordered locus">Ecok1_08790</name>
    <name type="ORF">APECO1_69</name>
</gene>
<accession>A1A9N3</accession>
<feature type="signal peptide" evidence="1">
    <location>
        <begin position="1"/>
        <end position="20"/>
    </location>
</feature>
<feature type="chain" id="PRO_1000046898" description="UPF0319 protein YccT">
    <location>
        <begin position="21"/>
        <end position="220"/>
    </location>
</feature>
<reference key="1">
    <citation type="journal article" date="2007" name="J. Bacteriol.">
        <title>The genome sequence of avian pathogenic Escherichia coli strain O1:K1:H7 shares strong similarities with human extraintestinal pathogenic E. coli genomes.</title>
        <authorList>
            <person name="Johnson T.J."/>
            <person name="Kariyawasam S."/>
            <person name="Wannemuehler Y."/>
            <person name="Mangiamele P."/>
            <person name="Johnson S.J."/>
            <person name="Doetkott C."/>
            <person name="Skyberg J.A."/>
            <person name="Lynne A.M."/>
            <person name="Johnson J.R."/>
            <person name="Nolan L.K."/>
        </authorList>
    </citation>
    <scope>NUCLEOTIDE SEQUENCE [LARGE SCALE GENOMIC DNA]</scope>
</reference>
<sequence length="220" mass="24594">MKTGIVTTLIALCLPVSVFATTLRLSTDVDLLVLDGKKVSSSLLRGADSIELDNGPHQLVFRVEKTIHLSNSEERLYISPPLVVSFNTQLINQVNFRLPRLENEREANHFDAAPRLELLDGDATPIPVKLDILAITSTAKTIDYEVEVERYNKSAKRASLPQFATMMADDSTLLSGVSELDAIPPQSQVLTEQRLKYWFKLADPQTRNTFLQWAEKQPSS</sequence>
<proteinExistence type="inferred from homology"/>
<organism>
    <name type="scientific">Escherichia coli O1:K1 / APEC</name>
    <dbReference type="NCBI Taxonomy" id="405955"/>
    <lineage>
        <taxon>Bacteria</taxon>
        <taxon>Pseudomonadati</taxon>
        <taxon>Pseudomonadota</taxon>
        <taxon>Gammaproteobacteria</taxon>
        <taxon>Enterobacterales</taxon>
        <taxon>Enterobacteriaceae</taxon>
        <taxon>Escherichia</taxon>
    </lineage>
</organism>
<name>YCCT_ECOK1</name>
<evidence type="ECO:0000255" key="1">
    <source>
        <dbReference type="HAMAP-Rule" id="MF_00789"/>
    </source>
</evidence>
<dbReference type="EMBL" id="CP000468">
    <property type="protein sequence ID" value="ABJ00373.1"/>
    <property type="molecule type" value="Genomic_DNA"/>
</dbReference>
<dbReference type="RefSeq" id="WP_000847791.1">
    <property type="nucleotide sequence ID" value="NZ_CADILS010000016.1"/>
</dbReference>
<dbReference type="KEGG" id="ecv:APECO1_69"/>
<dbReference type="HOGENOM" id="CLU_073782_2_0_6"/>
<dbReference type="Proteomes" id="UP000008216">
    <property type="component" value="Chromosome"/>
</dbReference>
<dbReference type="HAMAP" id="MF_00789">
    <property type="entry name" value="UPF0319"/>
    <property type="match status" value="1"/>
</dbReference>
<dbReference type="InterPro" id="IPR018635">
    <property type="entry name" value="UPF0319"/>
</dbReference>
<dbReference type="NCBIfam" id="NF047712">
    <property type="entry name" value="CrliSynInhib"/>
    <property type="match status" value="1"/>
</dbReference>
<dbReference type="NCBIfam" id="NF002967">
    <property type="entry name" value="PRK03641.1"/>
    <property type="match status" value="1"/>
</dbReference>
<dbReference type="PANTHER" id="PTHR38108">
    <property type="entry name" value="UPF0319 PROTEIN YCCT"/>
    <property type="match status" value="1"/>
</dbReference>
<dbReference type="PANTHER" id="PTHR38108:SF1">
    <property type="entry name" value="UPF0319 PROTEIN YCCT"/>
    <property type="match status" value="1"/>
</dbReference>
<dbReference type="Pfam" id="PF09829">
    <property type="entry name" value="DUF2057"/>
    <property type="match status" value="1"/>
</dbReference>
<comment type="similarity">
    <text evidence="1">Belongs to the UPF0319 family.</text>
</comment>
<keyword id="KW-1185">Reference proteome</keyword>
<keyword id="KW-0732">Signal</keyword>
<protein>
    <recommendedName>
        <fullName evidence="1">UPF0319 protein YccT</fullName>
    </recommendedName>
</protein>